<proteinExistence type="inferred from homology"/>
<evidence type="ECO:0000255" key="1">
    <source>
        <dbReference type="HAMAP-Rule" id="MF_00152"/>
    </source>
</evidence>
<protein>
    <recommendedName>
        <fullName evidence="1">Probable endonuclease 4</fullName>
        <ecNumber evidence="1">3.1.21.2</ecNumber>
    </recommendedName>
    <alternativeName>
        <fullName evidence="1">Endodeoxyribonuclease IV</fullName>
    </alternativeName>
    <alternativeName>
        <fullName evidence="1">Endonuclease IV</fullName>
    </alternativeName>
</protein>
<name>END4_SHIDS</name>
<accession>Q32EQ7</accession>
<feature type="chain" id="PRO_1000011333" description="Probable endonuclease 4">
    <location>
        <begin position="1"/>
        <end position="285"/>
    </location>
</feature>
<feature type="binding site" evidence="1">
    <location>
        <position position="69"/>
    </location>
    <ligand>
        <name>Zn(2+)</name>
        <dbReference type="ChEBI" id="CHEBI:29105"/>
        <label>1</label>
    </ligand>
</feature>
<feature type="binding site" evidence="1">
    <location>
        <position position="109"/>
    </location>
    <ligand>
        <name>Zn(2+)</name>
        <dbReference type="ChEBI" id="CHEBI:29105"/>
        <label>1</label>
    </ligand>
</feature>
<feature type="binding site" evidence="1">
    <location>
        <position position="145"/>
    </location>
    <ligand>
        <name>Zn(2+)</name>
        <dbReference type="ChEBI" id="CHEBI:29105"/>
        <label>1</label>
    </ligand>
</feature>
<feature type="binding site" evidence="1">
    <location>
        <position position="145"/>
    </location>
    <ligand>
        <name>Zn(2+)</name>
        <dbReference type="ChEBI" id="CHEBI:29105"/>
        <label>2</label>
    </ligand>
</feature>
<feature type="binding site" evidence="1">
    <location>
        <position position="179"/>
    </location>
    <ligand>
        <name>Zn(2+)</name>
        <dbReference type="ChEBI" id="CHEBI:29105"/>
        <label>2</label>
    </ligand>
</feature>
<feature type="binding site" evidence="1">
    <location>
        <position position="182"/>
    </location>
    <ligand>
        <name>Zn(2+)</name>
        <dbReference type="ChEBI" id="CHEBI:29105"/>
        <label>3</label>
    </ligand>
</feature>
<feature type="binding site" evidence="1">
    <location>
        <position position="216"/>
    </location>
    <ligand>
        <name>Zn(2+)</name>
        <dbReference type="ChEBI" id="CHEBI:29105"/>
        <label>2</label>
    </ligand>
</feature>
<feature type="binding site" evidence="1">
    <location>
        <position position="229"/>
    </location>
    <ligand>
        <name>Zn(2+)</name>
        <dbReference type="ChEBI" id="CHEBI:29105"/>
        <label>3</label>
    </ligand>
</feature>
<feature type="binding site" evidence="1">
    <location>
        <position position="231"/>
    </location>
    <ligand>
        <name>Zn(2+)</name>
        <dbReference type="ChEBI" id="CHEBI:29105"/>
        <label>3</label>
    </ligand>
</feature>
<feature type="binding site" evidence="1">
    <location>
        <position position="261"/>
    </location>
    <ligand>
        <name>Zn(2+)</name>
        <dbReference type="ChEBI" id="CHEBI:29105"/>
        <label>2</label>
    </ligand>
</feature>
<comment type="function">
    <text evidence="1">Endonuclease IV plays a role in DNA repair. It cleaves phosphodiester bonds at apurinic or apyrimidinic (AP) sites, generating a 3'-hydroxyl group and a 5'-terminal sugar phosphate.</text>
</comment>
<comment type="catalytic activity">
    <reaction evidence="1">
        <text>Endonucleolytic cleavage to 5'-phosphooligonucleotide end-products.</text>
        <dbReference type="EC" id="3.1.21.2"/>
    </reaction>
</comment>
<comment type="cofactor">
    <cofactor evidence="1">
        <name>Zn(2+)</name>
        <dbReference type="ChEBI" id="CHEBI:29105"/>
    </cofactor>
    <text evidence="1">Binds 3 Zn(2+) ions.</text>
</comment>
<comment type="similarity">
    <text evidence="1">Belongs to the AP endonuclease 2 family.</text>
</comment>
<dbReference type="EC" id="3.1.21.2" evidence="1"/>
<dbReference type="EMBL" id="CP000034">
    <property type="protein sequence ID" value="ABB62198.1"/>
    <property type="molecule type" value="Genomic_DNA"/>
</dbReference>
<dbReference type="RefSeq" id="WP_000873894.1">
    <property type="nucleotide sequence ID" value="NC_007606.1"/>
</dbReference>
<dbReference type="RefSeq" id="YP_403689.1">
    <property type="nucleotide sequence ID" value="NC_007606.1"/>
</dbReference>
<dbReference type="SMR" id="Q32EQ7"/>
<dbReference type="STRING" id="300267.SDY_2107"/>
<dbReference type="EnsemblBacteria" id="ABB62198">
    <property type="protein sequence ID" value="ABB62198"/>
    <property type="gene ID" value="SDY_2107"/>
</dbReference>
<dbReference type="KEGG" id="sdy:SDY_2107"/>
<dbReference type="PATRIC" id="fig|300267.13.peg.2537"/>
<dbReference type="HOGENOM" id="CLU_025885_0_4_6"/>
<dbReference type="Proteomes" id="UP000002716">
    <property type="component" value="Chromosome"/>
</dbReference>
<dbReference type="GO" id="GO:0008833">
    <property type="term" value="F:deoxyribonuclease IV (phage-T4-induced) activity"/>
    <property type="evidence" value="ECO:0007669"/>
    <property type="project" value="UniProtKB-UniRule"/>
</dbReference>
<dbReference type="GO" id="GO:0003677">
    <property type="term" value="F:DNA binding"/>
    <property type="evidence" value="ECO:0007669"/>
    <property type="project" value="InterPro"/>
</dbReference>
<dbReference type="GO" id="GO:0003906">
    <property type="term" value="F:DNA-(apurinic or apyrimidinic site) endonuclease activity"/>
    <property type="evidence" value="ECO:0007669"/>
    <property type="project" value="TreeGrafter"/>
</dbReference>
<dbReference type="GO" id="GO:0008081">
    <property type="term" value="F:phosphoric diester hydrolase activity"/>
    <property type="evidence" value="ECO:0007669"/>
    <property type="project" value="TreeGrafter"/>
</dbReference>
<dbReference type="GO" id="GO:0008270">
    <property type="term" value="F:zinc ion binding"/>
    <property type="evidence" value="ECO:0007669"/>
    <property type="project" value="UniProtKB-UniRule"/>
</dbReference>
<dbReference type="GO" id="GO:0006284">
    <property type="term" value="P:base-excision repair"/>
    <property type="evidence" value="ECO:0007669"/>
    <property type="project" value="TreeGrafter"/>
</dbReference>
<dbReference type="CDD" id="cd00019">
    <property type="entry name" value="AP2Ec"/>
    <property type="match status" value="1"/>
</dbReference>
<dbReference type="FunFam" id="3.20.20.150:FF:000001">
    <property type="entry name" value="Probable endonuclease 4"/>
    <property type="match status" value="1"/>
</dbReference>
<dbReference type="Gene3D" id="3.20.20.150">
    <property type="entry name" value="Divalent-metal-dependent TIM barrel enzymes"/>
    <property type="match status" value="1"/>
</dbReference>
<dbReference type="HAMAP" id="MF_00152">
    <property type="entry name" value="Nfo"/>
    <property type="match status" value="1"/>
</dbReference>
<dbReference type="InterPro" id="IPR001719">
    <property type="entry name" value="AP_endonuc_2"/>
</dbReference>
<dbReference type="InterPro" id="IPR018246">
    <property type="entry name" value="AP_endonuc_F2_Zn_BS"/>
</dbReference>
<dbReference type="InterPro" id="IPR036237">
    <property type="entry name" value="Xyl_isomerase-like_sf"/>
</dbReference>
<dbReference type="InterPro" id="IPR013022">
    <property type="entry name" value="Xyl_isomerase-like_TIM-brl"/>
</dbReference>
<dbReference type="NCBIfam" id="TIGR00587">
    <property type="entry name" value="nfo"/>
    <property type="match status" value="1"/>
</dbReference>
<dbReference type="NCBIfam" id="NF002199">
    <property type="entry name" value="PRK01060.1-4"/>
    <property type="match status" value="1"/>
</dbReference>
<dbReference type="PANTHER" id="PTHR21445:SF0">
    <property type="entry name" value="APURINIC-APYRIMIDINIC ENDONUCLEASE"/>
    <property type="match status" value="1"/>
</dbReference>
<dbReference type="PANTHER" id="PTHR21445">
    <property type="entry name" value="ENDONUCLEASE IV ENDODEOXYRIBONUCLEASE IV"/>
    <property type="match status" value="1"/>
</dbReference>
<dbReference type="Pfam" id="PF01261">
    <property type="entry name" value="AP_endonuc_2"/>
    <property type="match status" value="1"/>
</dbReference>
<dbReference type="SMART" id="SM00518">
    <property type="entry name" value="AP2Ec"/>
    <property type="match status" value="1"/>
</dbReference>
<dbReference type="SUPFAM" id="SSF51658">
    <property type="entry name" value="Xylose isomerase-like"/>
    <property type="match status" value="1"/>
</dbReference>
<dbReference type="PROSITE" id="PS00729">
    <property type="entry name" value="AP_NUCLEASE_F2_1"/>
    <property type="match status" value="1"/>
</dbReference>
<dbReference type="PROSITE" id="PS00730">
    <property type="entry name" value="AP_NUCLEASE_F2_2"/>
    <property type="match status" value="1"/>
</dbReference>
<dbReference type="PROSITE" id="PS00731">
    <property type="entry name" value="AP_NUCLEASE_F2_3"/>
    <property type="match status" value="1"/>
</dbReference>
<dbReference type="PROSITE" id="PS51432">
    <property type="entry name" value="AP_NUCLEASE_F2_4"/>
    <property type="match status" value="1"/>
</dbReference>
<sequence length="285" mass="31480">MKYIGAHVSAAGGLANAAIRAAEIDATAFALFTKNQRQWRAAPLTTQTIDEFKAACEKYHYTSAQILPHDSYLINLGHPVTEALEKSRDAFIDEMQRCEQLGLSLLNFHPGSHLMQISEEDCLARIAESINIALDKTQGVTAVIENTAGQGSNLGFKFEHLAAIIDGVEDKSRVGVCIDTCHAFAAGYDLRTPAECEKTFADFARTVGFKYLRGMHLNDAKSTFGSRVDRHHSLGEGNIGHDAFRWIMQDDRFDGIPLILETINPDIWAEEIAWLKAQQTEKAVA</sequence>
<reference key="1">
    <citation type="journal article" date="2005" name="Nucleic Acids Res.">
        <title>Genome dynamics and diversity of Shigella species, the etiologic agents of bacillary dysentery.</title>
        <authorList>
            <person name="Yang F."/>
            <person name="Yang J."/>
            <person name="Zhang X."/>
            <person name="Chen L."/>
            <person name="Jiang Y."/>
            <person name="Yan Y."/>
            <person name="Tang X."/>
            <person name="Wang J."/>
            <person name="Xiong Z."/>
            <person name="Dong J."/>
            <person name="Xue Y."/>
            <person name="Zhu Y."/>
            <person name="Xu X."/>
            <person name="Sun L."/>
            <person name="Chen S."/>
            <person name="Nie H."/>
            <person name="Peng J."/>
            <person name="Xu J."/>
            <person name="Wang Y."/>
            <person name="Yuan Z."/>
            <person name="Wen Y."/>
            <person name="Yao Z."/>
            <person name="Shen Y."/>
            <person name="Qiang B."/>
            <person name="Hou Y."/>
            <person name="Yu J."/>
            <person name="Jin Q."/>
        </authorList>
    </citation>
    <scope>NUCLEOTIDE SEQUENCE [LARGE SCALE GENOMIC DNA]</scope>
    <source>
        <strain>Sd197</strain>
    </source>
</reference>
<keyword id="KW-0227">DNA damage</keyword>
<keyword id="KW-0234">DNA repair</keyword>
<keyword id="KW-0255">Endonuclease</keyword>
<keyword id="KW-0378">Hydrolase</keyword>
<keyword id="KW-0479">Metal-binding</keyword>
<keyword id="KW-0540">Nuclease</keyword>
<keyword id="KW-1185">Reference proteome</keyword>
<keyword id="KW-0862">Zinc</keyword>
<organism>
    <name type="scientific">Shigella dysenteriae serotype 1 (strain Sd197)</name>
    <dbReference type="NCBI Taxonomy" id="300267"/>
    <lineage>
        <taxon>Bacteria</taxon>
        <taxon>Pseudomonadati</taxon>
        <taxon>Pseudomonadota</taxon>
        <taxon>Gammaproteobacteria</taxon>
        <taxon>Enterobacterales</taxon>
        <taxon>Enterobacteriaceae</taxon>
        <taxon>Shigella</taxon>
    </lineage>
</organism>
<gene>
    <name evidence="1" type="primary">nfo</name>
    <name type="ordered locus">SDY_2107</name>
</gene>